<dbReference type="EC" id="2.1.1.360"/>
<dbReference type="EMBL" id="AE017351">
    <property type="protein sequence ID" value="AAW46180.1"/>
    <property type="molecule type" value="Genomic_DNA"/>
</dbReference>
<dbReference type="RefSeq" id="XP_567697.1">
    <property type="nucleotide sequence ID" value="XM_567697.1"/>
</dbReference>
<dbReference type="SMR" id="P0CN14"/>
<dbReference type="STRING" id="214684.P0CN14"/>
<dbReference type="PaxDb" id="214684-P0CN14"/>
<dbReference type="EnsemblFungi" id="AAW46180">
    <property type="protein sequence ID" value="AAW46180"/>
    <property type="gene ID" value="CNK02230"/>
</dbReference>
<dbReference type="GeneID" id="3254655"/>
<dbReference type="KEGG" id="cne:CNK02230"/>
<dbReference type="VEuPathDB" id="FungiDB:CNK02230"/>
<dbReference type="eggNOG" id="KOG3924">
    <property type="taxonomic scope" value="Eukaryota"/>
</dbReference>
<dbReference type="HOGENOM" id="CLU_027287_1_0_1"/>
<dbReference type="InParanoid" id="P0CN14"/>
<dbReference type="OMA" id="PIMCLES"/>
<dbReference type="OrthoDB" id="443402at2759"/>
<dbReference type="Proteomes" id="UP000002149">
    <property type="component" value="Chromosome 11"/>
</dbReference>
<dbReference type="GO" id="GO:0000781">
    <property type="term" value="C:chromosome, telomeric region"/>
    <property type="evidence" value="ECO:0007669"/>
    <property type="project" value="GOC"/>
</dbReference>
<dbReference type="GO" id="GO:0000786">
    <property type="term" value="C:nucleosome"/>
    <property type="evidence" value="ECO:0007669"/>
    <property type="project" value="InterPro"/>
</dbReference>
<dbReference type="GO" id="GO:0005634">
    <property type="term" value="C:nucleus"/>
    <property type="evidence" value="ECO:0000318"/>
    <property type="project" value="GO_Central"/>
</dbReference>
<dbReference type="GO" id="GO:0042393">
    <property type="term" value="F:histone binding"/>
    <property type="evidence" value="ECO:0007669"/>
    <property type="project" value="InterPro"/>
</dbReference>
<dbReference type="GO" id="GO:0031151">
    <property type="term" value="F:histone H3K79 methyltransferase activity"/>
    <property type="evidence" value="ECO:0000318"/>
    <property type="project" value="GO_Central"/>
</dbReference>
<dbReference type="GO" id="GO:0140956">
    <property type="term" value="F:histone H3K79 trimethyltransferase activity"/>
    <property type="evidence" value="ECO:0007669"/>
    <property type="project" value="UniProtKB-EC"/>
</dbReference>
<dbReference type="GO" id="GO:0000077">
    <property type="term" value="P:DNA damage checkpoint signaling"/>
    <property type="evidence" value="ECO:0000318"/>
    <property type="project" value="GO_Central"/>
</dbReference>
<dbReference type="GO" id="GO:0006281">
    <property type="term" value="P:DNA repair"/>
    <property type="evidence" value="ECO:0000318"/>
    <property type="project" value="GO_Central"/>
</dbReference>
<dbReference type="GO" id="GO:0032259">
    <property type="term" value="P:methylation"/>
    <property type="evidence" value="ECO:0007669"/>
    <property type="project" value="UniProtKB-KW"/>
</dbReference>
<dbReference type="GO" id="GO:0031509">
    <property type="term" value="P:subtelomeric heterochromatin formation"/>
    <property type="evidence" value="ECO:0000318"/>
    <property type="project" value="GO_Central"/>
</dbReference>
<dbReference type="CDD" id="cd02440">
    <property type="entry name" value="AdoMet_MTases"/>
    <property type="match status" value="1"/>
</dbReference>
<dbReference type="FunFam" id="3.40.50.150:FF:000033">
    <property type="entry name" value="Histone-lysine N-methyltransferase, H3 lysine-79 specific"/>
    <property type="match status" value="1"/>
</dbReference>
<dbReference type="Gene3D" id="1.10.260.170">
    <property type="match status" value="1"/>
</dbReference>
<dbReference type="Gene3D" id="3.40.50.150">
    <property type="entry name" value="Vaccinia Virus protein VP39"/>
    <property type="match status" value="1"/>
</dbReference>
<dbReference type="InterPro" id="IPR021162">
    <property type="entry name" value="Dot1"/>
</dbReference>
<dbReference type="InterPro" id="IPR025789">
    <property type="entry name" value="DOT1_dom"/>
</dbReference>
<dbReference type="InterPro" id="IPR030445">
    <property type="entry name" value="H3-K79_meTrfase"/>
</dbReference>
<dbReference type="InterPro" id="IPR029063">
    <property type="entry name" value="SAM-dependent_MTases_sf"/>
</dbReference>
<dbReference type="PANTHER" id="PTHR21451">
    <property type="entry name" value="HISTONE H3 METHYLTRANSFERASE"/>
    <property type="match status" value="1"/>
</dbReference>
<dbReference type="PANTHER" id="PTHR21451:SF0">
    <property type="entry name" value="HISTONE-LYSINE N-METHYLTRANSFERASE, H3 LYSINE-79 SPECIFIC"/>
    <property type="match status" value="1"/>
</dbReference>
<dbReference type="Pfam" id="PF08123">
    <property type="entry name" value="DOT1"/>
    <property type="match status" value="1"/>
</dbReference>
<dbReference type="PIRSF" id="PIRSF017570">
    <property type="entry name" value="Histone_H3-K79_MeTrfase"/>
    <property type="match status" value="1"/>
</dbReference>
<dbReference type="SUPFAM" id="SSF53335">
    <property type="entry name" value="S-adenosyl-L-methionine-dependent methyltransferases"/>
    <property type="match status" value="1"/>
</dbReference>
<dbReference type="PROSITE" id="PS51569">
    <property type="entry name" value="DOT1"/>
    <property type="match status" value="1"/>
</dbReference>
<sequence length="644" mass="71286">MFSFFGDESKLPASTVMVSRMTVKKQAVARQQSSGPMAGPSKPSNVTPKHSHGSLKGTPRSASEKGTPKQGPSSSSKSTSKVKQEERIRLSTIPRTPASSSSPGRLKRKTPKVQVVESESSSGSESSDGALDSKPKRPKVTRKETGIDMTPLPGEEVVGRRVFCWDKVDMRGEWGRGWAGFVGCDEVVRGNVQGWANGGGGDGSKNLGKYRAFFPQEGFDRDGDFLPSVEVLYPAKGCREKFVLMVPSSDREFNPIGELRNTLRLILEHYIPPSHRHIFGTLAESLDISNPLSSLPSRMTTPLPNSLVTPPPDPASPSPAFAFEISATSTPAPSTERQETIADLIRKSLAPNRRDGPLFVTAIERYNSAMQAIQEDGTLQQWLDEGMNGGKGIKVREWAALVDFVHDQAYSRVVGGYSHELEHHPKHPEEVSKAISGKEDAYGELRHAFMSKIIEQTKLGPDSVFVDLGSGVGNCVLQASLQAGSRSYGFELLPVPAHCARLQVREVQRRWAMWALKGNLDVEVHEGDFRVHKEVGRRLREADVVLVNNEVFPSSLNMDLADMFLDLKEGAKIVSLKPFVPEGFRMNESNCDSFAAILRSTQHDYYRDWVSWKGEWGNYYVAVIDRSRRIKFEESMKGRASRRR</sequence>
<keyword id="KW-0156">Chromatin regulator</keyword>
<keyword id="KW-0489">Methyltransferase</keyword>
<keyword id="KW-0539">Nucleus</keyword>
<keyword id="KW-1185">Reference proteome</keyword>
<keyword id="KW-0677">Repeat</keyword>
<keyword id="KW-0949">S-adenosyl-L-methionine</keyword>
<keyword id="KW-0804">Transcription</keyword>
<keyword id="KW-0805">Transcription regulation</keyword>
<keyword id="KW-0808">Transferase</keyword>
<reference key="1">
    <citation type="journal article" date="2005" name="Science">
        <title>The genome of the basidiomycetous yeast and human pathogen Cryptococcus neoformans.</title>
        <authorList>
            <person name="Loftus B.J."/>
            <person name="Fung E."/>
            <person name="Roncaglia P."/>
            <person name="Rowley D."/>
            <person name="Amedeo P."/>
            <person name="Bruno D."/>
            <person name="Vamathevan J."/>
            <person name="Miranda M."/>
            <person name="Anderson I.J."/>
            <person name="Fraser J.A."/>
            <person name="Allen J.E."/>
            <person name="Bosdet I.E."/>
            <person name="Brent M.R."/>
            <person name="Chiu R."/>
            <person name="Doering T.L."/>
            <person name="Donlin M.J."/>
            <person name="D'Souza C.A."/>
            <person name="Fox D.S."/>
            <person name="Grinberg V."/>
            <person name="Fu J."/>
            <person name="Fukushima M."/>
            <person name="Haas B.J."/>
            <person name="Huang J.C."/>
            <person name="Janbon G."/>
            <person name="Jones S.J.M."/>
            <person name="Koo H.L."/>
            <person name="Krzywinski M.I."/>
            <person name="Kwon-Chung K.J."/>
            <person name="Lengeler K.B."/>
            <person name="Maiti R."/>
            <person name="Marra M.A."/>
            <person name="Marra R.E."/>
            <person name="Mathewson C.A."/>
            <person name="Mitchell T.G."/>
            <person name="Pertea M."/>
            <person name="Riggs F.R."/>
            <person name="Salzberg S.L."/>
            <person name="Schein J.E."/>
            <person name="Shvartsbeyn A."/>
            <person name="Shin H."/>
            <person name="Shumway M."/>
            <person name="Specht C.A."/>
            <person name="Suh B.B."/>
            <person name="Tenney A."/>
            <person name="Utterback T.R."/>
            <person name="Wickes B.L."/>
            <person name="Wortman J.R."/>
            <person name="Wye N.H."/>
            <person name="Kronstad J.W."/>
            <person name="Lodge J.K."/>
            <person name="Heitman J."/>
            <person name="Davis R.W."/>
            <person name="Fraser C.M."/>
            <person name="Hyman R.W."/>
        </authorList>
    </citation>
    <scope>NUCLEOTIDE SEQUENCE [LARGE SCALE GENOMIC DNA]</scope>
    <source>
        <strain>JEC21 / ATCC MYA-565</strain>
    </source>
</reference>
<comment type="function">
    <text evidence="2">Histone methyltransferase that specifically trimethylates histone H3 to form H3K79me3. This methylation is required for telomere silencing and for the pachytene checkpoint during the meiotic cell cycle by allowing the recruitment of RAD9 to double strand breaks. Nucleosomes are preferred as substrate compared to free histone.</text>
</comment>
<comment type="catalytic activity">
    <reaction evidence="2 3">
        <text>L-lysyl(79)-[histone H3] + 3 S-adenosyl-L-methionine = N(6),N(6),N(6)-trimethyl-L-lysyl(79)-[histone H3] + 3 S-adenosyl-L-homocysteine + 3 H(+)</text>
        <dbReference type="Rhea" id="RHEA:60328"/>
        <dbReference type="Rhea" id="RHEA-COMP:15549"/>
        <dbReference type="Rhea" id="RHEA-COMP:15552"/>
        <dbReference type="ChEBI" id="CHEBI:15378"/>
        <dbReference type="ChEBI" id="CHEBI:29969"/>
        <dbReference type="ChEBI" id="CHEBI:57856"/>
        <dbReference type="ChEBI" id="CHEBI:59789"/>
        <dbReference type="ChEBI" id="CHEBI:61961"/>
        <dbReference type="EC" id="2.1.1.360"/>
    </reaction>
</comment>
<comment type="activity regulation">
    <text evidence="1">Ubiquitination of histone H2B to form H2BK123ub1 is required for efficient DOT1 methyltransferase activity on histone H3.</text>
</comment>
<comment type="subcellular location">
    <subcellularLocation>
        <location evidence="1">Nucleus</location>
    </subcellularLocation>
</comment>
<comment type="miscellaneous">
    <text>In contrast to other lysine histone methyltransferases, it does not contain a SET domain, suggesting the existence of another mechanism for methylation of lysine residues of histones.</text>
</comment>
<comment type="similarity">
    <text evidence="3">Belongs to the class I-like SAM-binding methyltransferase superfamily. DOT1 family.</text>
</comment>
<feature type="chain" id="PRO_0000270610" description="Histone-lysine N-methyltransferase, H3 lysine-79 specific">
    <location>
        <begin position="1"/>
        <end position="644"/>
    </location>
</feature>
<feature type="domain" description="DOT1" evidence="3">
    <location>
        <begin position="297"/>
        <end position="637"/>
    </location>
</feature>
<feature type="region of interest" description="Disordered" evidence="4">
    <location>
        <begin position="25"/>
        <end position="148"/>
    </location>
</feature>
<feature type="compositionally biased region" description="Low complexity" evidence="4">
    <location>
        <begin position="68"/>
        <end position="81"/>
    </location>
</feature>
<feature type="compositionally biased region" description="Polar residues" evidence="4">
    <location>
        <begin position="93"/>
        <end position="103"/>
    </location>
</feature>
<feature type="compositionally biased region" description="Low complexity" evidence="4">
    <location>
        <begin position="117"/>
        <end position="127"/>
    </location>
</feature>
<feature type="compositionally biased region" description="Basic and acidic residues" evidence="4">
    <location>
        <begin position="131"/>
        <end position="146"/>
    </location>
</feature>
<feature type="binding site" evidence="3">
    <location>
        <begin position="442"/>
        <end position="445"/>
    </location>
    <ligand>
        <name>S-adenosyl-L-methionine</name>
        <dbReference type="ChEBI" id="CHEBI:59789"/>
    </ligand>
</feature>
<feature type="binding site" evidence="3">
    <location>
        <begin position="465"/>
        <end position="474"/>
    </location>
    <ligand>
        <name>S-adenosyl-L-methionine</name>
        <dbReference type="ChEBI" id="CHEBI:59789"/>
    </ligand>
</feature>
<feature type="binding site" evidence="3">
    <location>
        <position position="491"/>
    </location>
    <ligand>
        <name>S-adenosyl-L-methionine</name>
        <dbReference type="ChEBI" id="CHEBI:59789"/>
    </ligand>
</feature>
<feature type="binding site" evidence="3">
    <location>
        <begin position="528"/>
        <end position="529"/>
    </location>
    <ligand>
        <name>S-adenosyl-L-methionine</name>
        <dbReference type="ChEBI" id="CHEBI:59789"/>
    </ligand>
</feature>
<organism>
    <name type="scientific">Cryptococcus neoformans var. neoformans serotype D (strain JEC21 / ATCC MYA-565)</name>
    <name type="common">Filobasidiella neoformans</name>
    <dbReference type="NCBI Taxonomy" id="214684"/>
    <lineage>
        <taxon>Eukaryota</taxon>
        <taxon>Fungi</taxon>
        <taxon>Dikarya</taxon>
        <taxon>Basidiomycota</taxon>
        <taxon>Agaricomycotina</taxon>
        <taxon>Tremellomycetes</taxon>
        <taxon>Tremellales</taxon>
        <taxon>Cryptococcaceae</taxon>
        <taxon>Cryptococcus</taxon>
        <taxon>Cryptococcus neoformans species complex</taxon>
    </lineage>
</organism>
<evidence type="ECO:0000250" key="1"/>
<evidence type="ECO:0000250" key="2">
    <source>
        <dbReference type="UniProtKB" id="Q04089"/>
    </source>
</evidence>
<evidence type="ECO:0000255" key="3">
    <source>
        <dbReference type="PROSITE-ProRule" id="PRU00902"/>
    </source>
</evidence>
<evidence type="ECO:0000256" key="4">
    <source>
        <dbReference type="SAM" id="MobiDB-lite"/>
    </source>
</evidence>
<name>DOT1_CRYNJ</name>
<protein>
    <recommendedName>
        <fullName>Histone-lysine N-methyltransferase, H3 lysine-79 specific</fullName>
        <ecNumber>2.1.1.360</ecNumber>
    </recommendedName>
    <alternativeName>
        <fullName>Histone H3-K79 methyltransferase</fullName>
        <shortName>H3-K79-HMTase</shortName>
    </alternativeName>
</protein>
<accession>P0CN14</accession>
<accession>Q55K55</accession>
<accession>Q5K9E4</accession>
<gene>
    <name type="primary">DOT1</name>
    <name type="ordered locus">CNK02230</name>
</gene>
<proteinExistence type="inferred from homology"/>